<keyword id="KW-0249">Electron transport</keyword>
<keyword id="KW-0349">Heme</keyword>
<keyword id="KW-0408">Iron</keyword>
<keyword id="KW-0479">Metal-binding</keyword>
<keyword id="KW-0496">Mitochondrion</keyword>
<keyword id="KW-1185">Reference proteome</keyword>
<keyword id="KW-0679">Respiratory chain</keyword>
<keyword id="KW-0813">Transport</keyword>
<comment type="function">
    <text evidence="1">Electron carrier protein. The oxidized form of the cytochrome c heme group can accept an electron from the heme group of the cytochrome c1 subunit of cytochrome reductase. Cytochrome c then transfers this electron to the cytochrome oxidase complex, the final protein carrier in the mitochondrial electron-transport chain (By similarity).</text>
</comment>
<comment type="subcellular location">
    <subcellularLocation>
        <location evidence="1">Mitochondrion intermembrane space</location>
    </subcellularLocation>
    <text evidence="1">Loosely associated with the inner membrane.</text>
</comment>
<comment type="PTM">
    <text evidence="1">Binds 1 heme c group covalently per subunit.</text>
</comment>
<comment type="similarity">
    <text evidence="3">Belongs to the cytochrome c family.</text>
</comment>
<evidence type="ECO:0000250" key="1"/>
<evidence type="ECO:0000250" key="2">
    <source>
        <dbReference type="UniProtKB" id="P19974"/>
    </source>
</evidence>
<evidence type="ECO:0000255" key="3"/>
<evidence type="ECO:0000255" key="4">
    <source>
        <dbReference type="PROSITE-ProRule" id="PRU00433"/>
    </source>
</evidence>
<evidence type="ECO:0000312" key="5">
    <source>
        <dbReference type="EMBL" id="CAP22891.1"/>
    </source>
</evidence>
<feature type="initiator methionine" description="Removed" evidence="2">
    <location>
        <position position="1"/>
    </location>
</feature>
<feature type="chain" id="PRO_0000358600" description="Cytochrome c 2.1">
    <location>
        <begin position="2"/>
        <end position="112"/>
    </location>
</feature>
<feature type="binding site" description="covalent" evidence="4">
    <location>
        <position position="20"/>
    </location>
    <ligand>
        <name>heme c</name>
        <dbReference type="ChEBI" id="CHEBI:61717"/>
    </ligand>
</feature>
<feature type="binding site" description="covalent" evidence="4">
    <location>
        <position position="23"/>
    </location>
    <ligand>
        <name>heme c</name>
        <dbReference type="ChEBI" id="CHEBI:61717"/>
    </ligand>
</feature>
<feature type="binding site" description="axial binding residue" evidence="4">
    <location>
        <position position="24"/>
    </location>
    <ligand>
        <name>heme c</name>
        <dbReference type="ChEBI" id="CHEBI:61717"/>
    </ligand>
    <ligandPart>
        <name>Fe</name>
        <dbReference type="ChEBI" id="CHEBI:18248"/>
    </ligandPart>
</feature>
<feature type="binding site" description="axial binding residue" evidence="4">
    <location>
        <position position="85"/>
    </location>
    <ligand>
        <name>heme c</name>
        <dbReference type="ChEBI" id="CHEBI:61717"/>
    </ligand>
    <ligandPart>
        <name>Fe</name>
        <dbReference type="ChEBI" id="CHEBI:18248"/>
    </ligandPart>
</feature>
<gene>
    <name evidence="5" type="primary">cyc-2.1</name>
    <name type="ORF">CBG01744</name>
</gene>
<organism>
    <name type="scientific">Caenorhabditis briggsae</name>
    <dbReference type="NCBI Taxonomy" id="6238"/>
    <lineage>
        <taxon>Eukaryota</taxon>
        <taxon>Metazoa</taxon>
        <taxon>Ecdysozoa</taxon>
        <taxon>Nematoda</taxon>
        <taxon>Chromadorea</taxon>
        <taxon>Rhabditida</taxon>
        <taxon>Rhabditina</taxon>
        <taxon>Rhabditomorpha</taxon>
        <taxon>Rhabditoidea</taxon>
        <taxon>Rhabditidae</taxon>
        <taxon>Peloderinae</taxon>
        <taxon>Caenorhabditis</taxon>
    </lineage>
</organism>
<name>CYC21_CAEBR</name>
<reference evidence="5" key="1">
    <citation type="journal article" date="2003" name="PLoS Biol.">
        <title>The genome sequence of Caenorhabditis briggsae: a platform for comparative genomics.</title>
        <authorList>
            <person name="Stein L.D."/>
            <person name="Bao Z."/>
            <person name="Blasiar D."/>
            <person name="Blumenthal T."/>
            <person name="Brent M.R."/>
            <person name="Chen N."/>
            <person name="Chinwalla A."/>
            <person name="Clarke L."/>
            <person name="Clee C."/>
            <person name="Coghlan A."/>
            <person name="Coulson A."/>
            <person name="D'Eustachio P."/>
            <person name="Fitch D.H.A."/>
            <person name="Fulton L.A."/>
            <person name="Fulton R.E."/>
            <person name="Griffiths-Jones S."/>
            <person name="Harris T.W."/>
            <person name="Hillier L.W."/>
            <person name="Kamath R."/>
            <person name="Kuwabara P.E."/>
            <person name="Mardis E.R."/>
            <person name="Marra M.A."/>
            <person name="Miner T.L."/>
            <person name="Minx P."/>
            <person name="Mullikin J.C."/>
            <person name="Plumb R.W."/>
            <person name="Rogers J."/>
            <person name="Schein J.E."/>
            <person name="Sohrmann M."/>
            <person name="Spieth J."/>
            <person name="Stajich J.E."/>
            <person name="Wei C."/>
            <person name="Willey D."/>
            <person name="Wilson R.K."/>
            <person name="Durbin R.M."/>
            <person name="Waterston R.H."/>
        </authorList>
    </citation>
    <scope>NUCLEOTIDE SEQUENCE [LARGE SCALE GENOMIC DNA]</scope>
    <source>
        <strain evidence="5">AF16</strain>
    </source>
</reference>
<protein>
    <recommendedName>
        <fullName>Cytochrome c 2.1</fullName>
    </recommendedName>
</protein>
<sequence length="112" mass="12341">MADIPAGDYEKGKKVYKQRCLQCHVVDSTATKTGPTLYGVIGRTSGTVAGFDYSAANKSKGVVWTRETLFEYLLNPKKYIPGTKMVFAGLKKADERADLIKYIEVECSKPLA</sequence>
<dbReference type="EMBL" id="HE601298">
    <property type="protein sequence ID" value="CAP22891.1"/>
    <property type="molecule type" value="Genomic_DNA"/>
</dbReference>
<dbReference type="SMR" id="A8WQY3"/>
<dbReference type="FunCoup" id="A8WQY3">
    <property type="interactions" value="908"/>
</dbReference>
<dbReference type="STRING" id="6238.A8WQY3"/>
<dbReference type="EnsemblMetazoa" id="CBG01744.1">
    <property type="protein sequence ID" value="CBG01744.1"/>
    <property type="gene ID" value="WBGene00024932"/>
</dbReference>
<dbReference type="KEGG" id="cbr:CBG_01744"/>
<dbReference type="CTD" id="8576171"/>
<dbReference type="WormBase" id="CBG01744">
    <property type="protein sequence ID" value="CBP06075"/>
    <property type="gene ID" value="WBGene00024932"/>
    <property type="gene designation" value="Cbr-cyc-2.1"/>
</dbReference>
<dbReference type="eggNOG" id="KOG3453">
    <property type="taxonomic scope" value="Eukaryota"/>
</dbReference>
<dbReference type="HOGENOM" id="CLU_060944_3_1_1"/>
<dbReference type="InParanoid" id="A8WQY3"/>
<dbReference type="OMA" id="KARCAQC"/>
<dbReference type="Proteomes" id="UP000008549">
    <property type="component" value="Unassembled WGS sequence"/>
</dbReference>
<dbReference type="GO" id="GO:0005758">
    <property type="term" value="C:mitochondrial intermembrane space"/>
    <property type="evidence" value="ECO:0000318"/>
    <property type="project" value="GO_Central"/>
</dbReference>
<dbReference type="GO" id="GO:0009055">
    <property type="term" value="F:electron transfer activity"/>
    <property type="evidence" value="ECO:0000250"/>
    <property type="project" value="UniProtKB"/>
</dbReference>
<dbReference type="GO" id="GO:0020037">
    <property type="term" value="F:heme binding"/>
    <property type="evidence" value="ECO:0007669"/>
    <property type="project" value="InterPro"/>
</dbReference>
<dbReference type="GO" id="GO:0046872">
    <property type="term" value="F:metal ion binding"/>
    <property type="evidence" value="ECO:0007669"/>
    <property type="project" value="UniProtKB-KW"/>
</dbReference>
<dbReference type="GO" id="GO:0022900">
    <property type="term" value="P:electron transport chain"/>
    <property type="evidence" value="ECO:0000250"/>
    <property type="project" value="UniProtKB"/>
</dbReference>
<dbReference type="GO" id="GO:0006123">
    <property type="term" value="P:mitochondrial electron transport, cytochrome c to oxygen"/>
    <property type="evidence" value="ECO:0000318"/>
    <property type="project" value="GO_Central"/>
</dbReference>
<dbReference type="GO" id="GO:0006122">
    <property type="term" value="P:mitochondrial electron transport, ubiquinol to cytochrome c"/>
    <property type="evidence" value="ECO:0000318"/>
    <property type="project" value="GO_Central"/>
</dbReference>
<dbReference type="FunFam" id="1.10.760.10:FF:000014">
    <property type="entry name" value="Cytochrome c"/>
    <property type="match status" value="1"/>
</dbReference>
<dbReference type="Gene3D" id="1.10.760.10">
    <property type="entry name" value="Cytochrome c-like domain"/>
    <property type="match status" value="1"/>
</dbReference>
<dbReference type="InterPro" id="IPR009056">
    <property type="entry name" value="Cyt_c-like_dom"/>
</dbReference>
<dbReference type="InterPro" id="IPR036909">
    <property type="entry name" value="Cyt_c-like_dom_sf"/>
</dbReference>
<dbReference type="InterPro" id="IPR002327">
    <property type="entry name" value="Cyt_c_1A/1B"/>
</dbReference>
<dbReference type="PANTHER" id="PTHR11961">
    <property type="entry name" value="CYTOCHROME C"/>
    <property type="match status" value="1"/>
</dbReference>
<dbReference type="Pfam" id="PF00034">
    <property type="entry name" value="Cytochrom_C"/>
    <property type="match status" value="1"/>
</dbReference>
<dbReference type="PRINTS" id="PR00604">
    <property type="entry name" value="CYTCHRMECIAB"/>
</dbReference>
<dbReference type="SUPFAM" id="SSF46626">
    <property type="entry name" value="Cytochrome c"/>
    <property type="match status" value="1"/>
</dbReference>
<dbReference type="PROSITE" id="PS51007">
    <property type="entry name" value="CYTC"/>
    <property type="match status" value="1"/>
</dbReference>
<accession>A8WQY3</accession>
<proteinExistence type="inferred from homology"/>